<reference key="1">
    <citation type="submission" date="2008-08" db="EMBL/GenBank/DDBJ databases">
        <title>Complete sequence of Vibrio fischeri strain MJ11.</title>
        <authorList>
            <person name="Mandel M.J."/>
            <person name="Stabb E.V."/>
            <person name="Ruby E.G."/>
            <person name="Ferriera S."/>
            <person name="Johnson J."/>
            <person name="Kravitz S."/>
            <person name="Beeson K."/>
            <person name="Sutton G."/>
            <person name="Rogers Y.-H."/>
            <person name="Friedman R."/>
            <person name="Frazier M."/>
            <person name="Venter J.C."/>
        </authorList>
    </citation>
    <scope>NUCLEOTIDE SEQUENCE [LARGE SCALE GENOMIC DNA]</scope>
    <source>
        <strain>MJ11</strain>
    </source>
</reference>
<gene>
    <name evidence="1" type="primary">nfuA</name>
    <name type="ordered locus">VFMJ11_2584</name>
</gene>
<dbReference type="EMBL" id="CP001139">
    <property type="protein sequence ID" value="ACH67379.1"/>
    <property type="molecule type" value="Genomic_DNA"/>
</dbReference>
<dbReference type="RefSeq" id="WP_005421395.1">
    <property type="nucleotide sequence ID" value="NC_011184.1"/>
</dbReference>
<dbReference type="SMR" id="B5FCD0"/>
<dbReference type="GeneID" id="54165191"/>
<dbReference type="KEGG" id="vfm:VFMJ11_2584"/>
<dbReference type="HOGENOM" id="CLU_094569_0_0_6"/>
<dbReference type="Proteomes" id="UP000001857">
    <property type="component" value="Chromosome I"/>
</dbReference>
<dbReference type="GO" id="GO:0051539">
    <property type="term" value="F:4 iron, 4 sulfur cluster binding"/>
    <property type="evidence" value="ECO:0007669"/>
    <property type="project" value="UniProtKB-UniRule"/>
</dbReference>
<dbReference type="GO" id="GO:0005506">
    <property type="term" value="F:iron ion binding"/>
    <property type="evidence" value="ECO:0007669"/>
    <property type="project" value="InterPro"/>
</dbReference>
<dbReference type="GO" id="GO:0016226">
    <property type="term" value="P:iron-sulfur cluster assembly"/>
    <property type="evidence" value="ECO:0007669"/>
    <property type="project" value="UniProtKB-UniRule"/>
</dbReference>
<dbReference type="GO" id="GO:0051604">
    <property type="term" value="P:protein maturation"/>
    <property type="evidence" value="ECO:0007669"/>
    <property type="project" value="UniProtKB-UniRule"/>
</dbReference>
<dbReference type="Gene3D" id="3.30.300.130">
    <property type="entry name" value="Fe-S cluster assembly (FSCA)"/>
    <property type="match status" value="1"/>
</dbReference>
<dbReference type="Gene3D" id="2.60.300.12">
    <property type="entry name" value="HesB-like domain"/>
    <property type="match status" value="1"/>
</dbReference>
<dbReference type="HAMAP" id="MF_01637">
    <property type="entry name" value="Fe_S_biogen_NfuA"/>
    <property type="match status" value="1"/>
</dbReference>
<dbReference type="InterPro" id="IPR017726">
    <property type="entry name" value="Fe/S_biogenesis_protein_NfuA"/>
</dbReference>
<dbReference type="InterPro" id="IPR000361">
    <property type="entry name" value="FeS_biogenesis"/>
</dbReference>
<dbReference type="InterPro" id="IPR034904">
    <property type="entry name" value="FSCA_dom_sf"/>
</dbReference>
<dbReference type="InterPro" id="IPR035903">
    <property type="entry name" value="HesB-like_dom_sf"/>
</dbReference>
<dbReference type="InterPro" id="IPR001075">
    <property type="entry name" value="NIF_FeS_clus_asmbl_NifU_C"/>
</dbReference>
<dbReference type="NCBIfam" id="NF008392">
    <property type="entry name" value="PRK11190.1"/>
    <property type="match status" value="1"/>
</dbReference>
<dbReference type="NCBIfam" id="TIGR03341">
    <property type="entry name" value="YhgI_GntY"/>
    <property type="match status" value="1"/>
</dbReference>
<dbReference type="PANTHER" id="PTHR11178:SF51">
    <property type="entry name" value="FE_S BIOGENESIS PROTEIN NFUA"/>
    <property type="match status" value="1"/>
</dbReference>
<dbReference type="PANTHER" id="PTHR11178">
    <property type="entry name" value="IRON-SULFUR CLUSTER SCAFFOLD PROTEIN NFU-RELATED"/>
    <property type="match status" value="1"/>
</dbReference>
<dbReference type="Pfam" id="PF01521">
    <property type="entry name" value="Fe-S_biosyn"/>
    <property type="match status" value="1"/>
</dbReference>
<dbReference type="Pfam" id="PF01106">
    <property type="entry name" value="NifU"/>
    <property type="match status" value="1"/>
</dbReference>
<dbReference type="SUPFAM" id="SSF117916">
    <property type="entry name" value="Fe-S cluster assembly (FSCA) domain-like"/>
    <property type="match status" value="1"/>
</dbReference>
<dbReference type="SUPFAM" id="SSF89360">
    <property type="entry name" value="HesB-like domain"/>
    <property type="match status" value="1"/>
</dbReference>
<accession>B5FCD0</accession>
<proteinExistence type="inferred from homology"/>
<feature type="chain" id="PRO_1000186787" description="Fe/S biogenesis protein NfuA">
    <location>
        <begin position="1"/>
        <end position="194"/>
    </location>
</feature>
<feature type="binding site" evidence="1">
    <location>
        <position position="151"/>
    </location>
    <ligand>
        <name>[4Fe-4S] cluster</name>
        <dbReference type="ChEBI" id="CHEBI:49883"/>
    </ligand>
</feature>
<feature type="binding site" evidence="1">
    <location>
        <position position="154"/>
    </location>
    <ligand>
        <name>[4Fe-4S] cluster</name>
        <dbReference type="ChEBI" id="CHEBI:49883"/>
    </ligand>
</feature>
<comment type="function">
    <text evidence="1">Involved in iron-sulfur cluster biogenesis. Binds a 4Fe-4S cluster, can transfer this cluster to apoproteins, and thereby intervenes in the maturation of Fe/S proteins. Could also act as a scaffold/chaperone for damaged Fe/S proteins.</text>
</comment>
<comment type="cofactor">
    <cofactor evidence="1">
        <name>[4Fe-4S] cluster</name>
        <dbReference type="ChEBI" id="CHEBI:49883"/>
    </cofactor>
    <text evidence="1">Binds 1 [4Fe-4S] cluster per subunit. The cluster is presumably bound at the interface of two monomers.</text>
</comment>
<comment type="subunit">
    <text evidence="1">Homodimer.</text>
</comment>
<comment type="similarity">
    <text evidence="1">Belongs to the NfuA family.</text>
</comment>
<keyword id="KW-0004">4Fe-4S</keyword>
<keyword id="KW-0408">Iron</keyword>
<keyword id="KW-0411">Iron-sulfur</keyword>
<keyword id="KW-0479">Metal-binding</keyword>
<evidence type="ECO:0000255" key="1">
    <source>
        <dbReference type="HAMAP-Rule" id="MF_01637"/>
    </source>
</evidence>
<protein>
    <recommendedName>
        <fullName evidence="1">Fe/S biogenesis protein NfuA</fullName>
    </recommendedName>
</protein>
<sequence length="194" mass="21255">MSSINITESAQEHFAKLLAQQPEGTNIRVFVVNPGTQNAECGVSYCPPEAVEANDTELKFEKLSAYVDELSLPFLEDADIDYVTDKMGSQLTLKAPNAKMRKVADDAPLFERVEYAIQTQVNPQLAGHGGHVSLMEINDEGVAIVQFGGGCNGCSMVDVTLKEGIEKELLVQFEGELTAVKDLTEHDRGEHSYY</sequence>
<name>NFUA_ALIFM</name>
<organism>
    <name type="scientific">Aliivibrio fischeri (strain MJ11)</name>
    <name type="common">Vibrio fischeri</name>
    <dbReference type="NCBI Taxonomy" id="388396"/>
    <lineage>
        <taxon>Bacteria</taxon>
        <taxon>Pseudomonadati</taxon>
        <taxon>Pseudomonadota</taxon>
        <taxon>Gammaproteobacteria</taxon>
        <taxon>Vibrionales</taxon>
        <taxon>Vibrionaceae</taxon>
        <taxon>Aliivibrio</taxon>
    </lineage>
</organism>